<comment type="function">
    <text evidence="1">NDH shuttles electrons from NAD(P)H:plastoquinone, via FMN and iron-sulfur (Fe-S) centers, to quinones in the photosynthetic chain and possibly in a chloroplast respiratory chain. The immediate electron acceptor for the enzyme in this species is believed to be plastoquinone. Couples the redox reaction to proton translocation, and thus conserves the redox energy in a proton gradient.</text>
</comment>
<comment type="catalytic activity">
    <reaction evidence="1">
        <text>a plastoquinone + NADH + (n+1) H(+)(in) = a plastoquinol + NAD(+) + n H(+)(out)</text>
        <dbReference type="Rhea" id="RHEA:42608"/>
        <dbReference type="Rhea" id="RHEA-COMP:9561"/>
        <dbReference type="Rhea" id="RHEA-COMP:9562"/>
        <dbReference type="ChEBI" id="CHEBI:15378"/>
        <dbReference type="ChEBI" id="CHEBI:17757"/>
        <dbReference type="ChEBI" id="CHEBI:57540"/>
        <dbReference type="ChEBI" id="CHEBI:57945"/>
        <dbReference type="ChEBI" id="CHEBI:62192"/>
    </reaction>
</comment>
<comment type="catalytic activity">
    <reaction evidence="1">
        <text>a plastoquinone + NADPH + (n+1) H(+)(in) = a plastoquinol + NADP(+) + n H(+)(out)</text>
        <dbReference type="Rhea" id="RHEA:42612"/>
        <dbReference type="Rhea" id="RHEA-COMP:9561"/>
        <dbReference type="Rhea" id="RHEA-COMP:9562"/>
        <dbReference type="ChEBI" id="CHEBI:15378"/>
        <dbReference type="ChEBI" id="CHEBI:17757"/>
        <dbReference type="ChEBI" id="CHEBI:57783"/>
        <dbReference type="ChEBI" id="CHEBI:58349"/>
        <dbReference type="ChEBI" id="CHEBI:62192"/>
    </reaction>
</comment>
<comment type="subunit">
    <text evidence="1">NDH is composed of at least 16 different subunits, 5 of which are encoded in the nucleus.</text>
</comment>
<comment type="subcellular location">
    <subcellularLocation>
        <location evidence="1">Plastid</location>
        <location evidence="1">Chloroplast thylakoid membrane</location>
        <topology evidence="1">Multi-pass membrane protein</topology>
    </subcellularLocation>
</comment>
<comment type="similarity">
    <text evidence="1">Belongs to the complex I subunit 1 family.</text>
</comment>
<gene>
    <name evidence="1" type="primary">ndhA</name>
</gene>
<sequence>MGFNTNLKEQVITFFSALSLSKDFFNFIWIAFSILILLLTITIGVLVLVWLERKISAGIQQRIGPEYAGPLGIIQALADGFKLLLKEDIIPSKGDNWLFNIGPAIVVIPVFLSYLVIPFGHNIILADLNIGVFFWIAISSIVPLGLLMAGYGSNNKYSFLGGLRAAAQSISYEIPLALCVLSISLQLSNSLSTVDIVEAQAKYGFWGWNVWRQPIGFLAFFIASLAECERLPFDLPEAEEELVAGYQTEYSGIKFGLFYVASYLNLLASSLFVTILYLGGWHFSIPFLLNSNYLEWVFSHGSNQVINIIIGIIIVLIKSYLFSFIAIMTRWTLPRVRMDQLLDLGWKFLLPIALGNLLLTASFQAFLL</sequence>
<protein>
    <recommendedName>
        <fullName evidence="1">NAD(P)H-quinone oxidoreductase subunit 1, chloroplastic</fullName>
        <ecNumber evidence="1">7.1.1.-</ecNumber>
    </recommendedName>
    <alternativeName>
        <fullName evidence="1">NAD(P)H dehydrogenase subunit 1</fullName>
        <shortName evidence="1">NDH subunit 1</shortName>
    </alternativeName>
    <alternativeName>
        <fullName evidence="1">NADH-plastoquinone oxidoreductase subunit 1</fullName>
    </alternativeName>
</protein>
<name>NU1C_PHYPA</name>
<evidence type="ECO:0000255" key="1">
    <source>
        <dbReference type="HAMAP-Rule" id="MF_01350"/>
    </source>
</evidence>
<geneLocation type="chloroplast"/>
<proteinExistence type="inferred from homology"/>
<reference key="1">
    <citation type="journal article" date="2003" name="Nucleic Acids Res.">
        <title>Complete chloroplast DNA sequence of the moss Physcomitrella patens: evidence for the loss and relocation of rpoA from the chloroplast to the nucleus.</title>
        <authorList>
            <person name="Sugiura C."/>
            <person name="Kobayashi Y."/>
            <person name="Setsuyuki A."/>
            <person name="Sugita C."/>
            <person name="Sugita M."/>
        </authorList>
    </citation>
    <scope>NUCLEOTIDE SEQUENCE [LARGE SCALE GENOMIC DNA]</scope>
    <source>
        <strain>cv. Gransden 2004</strain>
    </source>
</reference>
<accession>Q6YXP8</accession>
<keyword id="KW-0150">Chloroplast</keyword>
<keyword id="KW-0472">Membrane</keyword>
<keyword id="KW-0520">NAD</keyword>
<keyword id="KW-0521">NADP</keyword>
<keyword id="KW-0934">Plastid</keyword>
<keyword id="KW-0618">Plastoquinone</keyword>
<keyword id="KW-0874">Quinone</keyword>
<keyword id="KW-1185">Reference proteome</keyword>
<keyword id="KW-0793">Thylakoid</keyword>
<keyword id="KW-1278">Translocase</keyword>
<keyword id="KW-0812">Transmembrane</keyword>
<keyword id="KW-1133">Transmembrane helix</keyword>
<organism>
    <name type="scientific">Physcomitrium patens</name>
    <name type="common">Spreading-leaved earth moss</name>
    <name type="synonym">Physcomitrella patens</name>
    <dbReference type="NCBI Taxonomy" id="3218"/>
    <lineage>
        <taxon>Eukaryota</taxon>
        <taxon>Viridiplantae</taxon>
        <taxon>Streptophyta</taxon>
        <taxon>Embryophyta</taxon>
        <taxon>Bryophyta</taxon>
        <taxon>Bryophytina</taxon>
        <taxon>Bryopsida</taxon>
        <taxon>Funariidae</taxon>
        <taxon>Funariales</taxon>
        <taxon>Funariaceae</taxon>
        <taxon>Physcomitrium</taxon>
    </lineage>
</organism>
<feature type="chain" id="PRO_0000240030" description="NAD(P)H-quinone oxidoreductase subunit 1, chloroplastic">
    <location>
        <begin position="1"/>
        <end position="368"/>
    </location>
</feature>
<feature type="transmembrane region" description="Helical" evidence="1">
    <location>
        <begin position="27"/>
        <end position="47"/>
    </location>
</feature>
<feature type="transmembrane region" description="Helical" evidence="1">
    <location>
        <begin position="97"/>
        <end position="117"/>
    </location>
</feature>
<feature type="transmembrane region" description="Helical" evidence="1">
    <location>
        <begin position="130"/>
        <end position="150"/>
    </location>
</feature>
<feature type="transmembrane region" description="Helical" evidence="1">
    <location>
        <begin position="269"/>
        <end position="289"/>
    </location>
</feature>
<feature type="transmembrane region" description="Helical" evidence="1">
    <location>
        <begin position="308"/>
        <end position="328"/>
    </location>
</feature>
<feature type="transmembrane region" description="Helical" evidence="1">
    <location>
        <begin position="348"/>
        <end position="368"/>
    </location>
</feature>
<dbReference type="EC" id="7.1.1.-" evidence="1"/>
<dbReference type="EMBL" id="AP005672">
    <property type="protein sequence ID" value="BAC85093.1"/>
    <property type="molecule type" value="Genomic_DNA"/>
</dbReference>
<dbReference type="RefSeq" id="NP_904243.1">
    <property type="nucleotide sequence ID" value="NC_005087.2"/>
</dbReference>
<dbReference type="RefSeq" id="YP_009477573.1">
    <property type="nucleotide sequence ID" value="NC_037465.1"/>
</dbReference>
<dbReference type="SMR" id="Q6YXP8"/>
<dbReference type="FunCoup" id="Q6YXP8">
    <property type="interactions" value="29"/>
</dbReference>
<dbReference type="STRING" id="3218.Q6YXP8"/>
<dbReference type="GeneID" id="2546729"/>
<dbReference type="GeneID" id="36487218"/>
<dbReference type="KEGG" id="ppp:2546729"/>
<dbReference type="InParanoid" id="Q6YXP8"/>
<dbReference type="OrthoDB" id="531329at2759"/>
<dbReference type="Proteomes" id="UP000006727">
    <property type="component" value="Chloroplast"/>
</dbReference>
<dbReference type="GO" id="GO:0009535">
    <property type="term" value="C:chloroplast thylakoid membrane"/>
    <property type="evidence" value="ECO:0007669"/>
    <property type="project" value="UniProtKB-SubCell"/>
</dbReference>
<dbReference type="GO" id="GO:0016655">
    <property type="term" value="F:oxidoreductase activity, acting on NAD(P)H, quinone or similar compound as acceptor"/>
    <property type="evidence" value="ECO:0007669"/>
    <property type="project" value="UniProtKB-UniRule"/>
</dbReference>
<dbReference type="GO" id="GO:0048038">
    <property type="term" value="F:quinone binding"/>
    <property type="evidence" value="ECO:0007669"/>
    <property type="project" value="UniProtKB-KW"/>
</dbReference>
<dbReference type="GO" id="GO:0009060">
    <property type="term" value="P:aerobic respiration"/>
    <property type="evidence" value="ECO:0000318"/>
    <property type="project" value="GO_Central"/>
</dbReference>
<dbReference type="GO" id="GO:0019684">
    <property type="term" value="P:photosynthesis, light reaction"/>
    <property type="evidence" value="ECO:0007669"/>
    <property type="project" value="UniProtKB-UniRule"/>
</dbReference>
<dbReference type="HAMAP" id="MF_01350">
    <property type="entry name" value="NDH1_NuoH"/>
    <property type="match status" value="1"/>
</dbReference>
<dbReference type="InterPro" id="IPR001694">
    <property type="entry name" value="NADH_UbQ_OxRdtase_su1/FPO"/>
</dbReference>
<dbReference type="InterPro" id="IPR018086">
    <property type="entry name" value="NADH_UbQ_OxRdtase_su1_CS"/>
</dbReference>
<dbReference type="NCBIfam" id="NF004741">
    <property type="entry name" value="PRK06076.1-2"/>
    <property type="match status" value="1"/>
</dbReference>
<dbReference type="NCBIfam" id="NF004744">
    <property type="entry name" value="PRK06076.1-5"/>
    <property type="match status" value="1"/>
</dbReference>
<dbReference type="PANTHER" id="PTHR11432">
    <property type="entry name" value="NADH DEHYDROGENASE SUBUNIT 1"/>
    <property type="match status" value="1"/>
</dbReference>
<dbReference type="PANTHER" id="PTHR11432:SF3">
    <property type="entry name" value="NADH-UBIQUINONE OXIDOREDUCTASE CHAIN 1"/>
    <property type="match status" value="1"/>
</dbReference>
<dbReference type="Pfam" id="PF00146">
    <property type="entry name" value="NADHdh"/>
    <property type="match status" value="1"/>
</dbReference>
<dbReference type="PROSITE" id="PS00667">
    <property type="entry name" value="COMPLEX1_ND1_1"/>
    <property type="match status" value="1"/>
</dbReference>
<dbReference type="PROSITE" id="PS00668">
    <property type="entry name" value="COMPLEX1_ND1_2"/>
    <property type="match status" value="1"/>
</dbReference>